<name>T132E_MOUSE</name>
<comment type="function">
    <text evidence="1">Required for normal inner ear hair cell function and hearing.</text>
</comment>
<comment type="subcellular location">
    <subcellularLocation>
        <location evidence="5">Membrane</location>
        <topology evidence="5">Single-pass type I membrane protein</topology>
    </subcellularLocation>
</comment>
<comment type="tissue specificity">
    <text evidence="4">Widely expressed, with highest levels in the cochlea. In the cochlea, detected in spiral ganglion, the organ of Corti and stria vascularis. In the organ of Corti, prominently expressed in the outer and inner hair cells, especially at the apical and basal region of the outer hair cell body (at protein level).</text>
</comment>
<comment type="similarity">
    <text evidence="5">Belongs to the TMEM132 family.</text>
</comment>
<comment type="sequence caution" evidence="5">
    <conflict type="miscellaneous discrepancy">
        <sequence resource="EMBL-CDS" id="CAD80243"/>
    </conflict>
    <text>Artifactual sequence.</text>
</comment>
<evidence type="ECO:0000250" key="1">
    <source>
        <dbReference type="UniProtKB" id="Q6IEE7"/>
    </source>
</evidence>
<evidence type="ECO:0000255" key="2"/>
<evidence type="ECO:0000256" key="3">
    <source>
        <dbReference type="SAM" id="MobiDB-lite"/>
    </source>
</evidence>
<evidence type="ECO:0000269" key="4">
    <source>
    </source>
</evidence>
<evidence type="ECO:0000305" key="5"/>
<evidence type="ECO:0000312" key="6">
    <source>
        <dbReference type="EMBL" id="AAI45027.1"/>
    </source>
</evidence>
<keyword id="KW-0325">Glycoprotein</keyword>
<keyword id="KW-0472">Membrane</keyword>
<keyword id="KW-1185">Reference proteome</keyword>
<keyword id="KW-0732">Signal</keyword>
<keyword id="KW-0812">Transmembrane</keyword>
<keyword id="KW-1133">Transmembrane helix</keyword>
<protein>
    <recommendedName>
        <fullName>Transmembrane protein 132E</fullName>
    </recommendedName>
</protein>
<sequence>MAPGMSGRRGAALLCLSVLLAHAASRSHPASPSPPGTQASPILPVSYRLSHTRLAFFLKEARPLTPAAINGSLQRSEPFVVFQTKELPVLNVSLGPFSTSQVVARELLQPSSTLDIPERLTVNWKVRAFIVRARVPASQPVAQVLFYVAGRDWDDFGVTERLPCVRLHAFRDAREVRSSCRLGGALATCLVRAELPLAWFGPPAPAAPPSARRKSPDGLEPEAAAESQQVELYYTLHAPDASGGCGSARRGPGPGPGAAARAESPTQHPLLRIGSISLFRPPPRRAVQEHRLDSNLMIRLPDRPLRPGEVLSILLYLAPNSSSAASPSVEHFTLRVKAKKGVTLLGTKSRSGQWRVTSELLTGAKHSTATVDVAWALDTPLPPWEGQGPLEILQLDFEMENFTSQSVKRRIMWHIDYRGHSALPDLERAVTELTVIQRDVQAILPLAMDTEIINTAILTGRTVAIPVKVIAIEVTGLVLDVSDLVECQSHSEDIIKVSSSCDYVFVSGKESRGSMNARVTFRYDVLSAPLEMTVWVPKLPLHIELSDARLSQVKGWRVPILPDRRSARESEDEEEEEEERRQSANRGCTLQYQHATLQVFTQFHTTSSEGTDQVVTMLGPDWLVEVTDLVSDFMRVGDPRVAHLVDSNTLAGLEPGTTPFKVVSPLTEAVLGETLLTVTEEKVSITQLQAQVVASLTLSLRPSPGSSHTILATTAAQPTLSLVKQEALLSLWLSYSDGTTAPLSLYSSRDYGLLVSSLDERVATVTQDKAFPLVVAEAEGSGDLLRAELTISESCQKTKRKSVLATTPVSLRVHFGRDEEDPTYDYPGPSQPGPGGGEDEARGAGPPGTAIPAGEVPGLGTAGPVPPTEDYLPLPTGFLQMPRGLTDLEIGMYALLGVFCLAILVFLINCIVFVLRYRHKRIPPEGQTSMDHSHHWVFLGNGQPLRVQGELSPPAGSALETVPACCHGDHHSSGSSQTSVQSQVHGRGDGSSGGSARDQTEDPASSPTSKRKRVKFTTFTTLPTEELAYDSVPAGEEEDEEEDLGWGCPDVAGTTRPTPPPDLHNYMRRIKDIA</sequence>
<gene>
    <name type="primary">Tmem132e</name>
    <name type="synonym">Gm644</name>
</gene>
<organism>
    <name type="scientific">Mus musculus</name>
    <name type="common">Mouse</name>
    <dbReference type="NCBI Taxonomy" id="10090"/>
    <lineage>
        <taxon>Eukaryota</taxon>
        <taxon>Metazoa</taxon>
        <taxon>Chordata</taxon>
        <taxon>Craniata</taxon>
        <taxon>Vertebrata</taxon>
        <taxon>Euteleostomi</taxon>
        <taxon>Mammalia</taxon>
        <taxon>Eutheria</taxon>
        <taxon>Euarchontoglires</taxon>
        <taxon>Glires</taxon>
        <taxon>Rodentia</taxon>
        <taxon>Myomorpha</taxon>
        <taxon>Muroidea</taxon>
        <taxon>Muridae</taxon>
        <taxon>Murinae</taxon>
        <taxon>Mus</taxon>
        <taxon>Mus</taxon>
    </lineage>
</organism>
<reference key="1">
    <citation type="journal article" date="2009" name="PLoS Biol.">
        <title>Lineage-specific biology revealed by a finished genome assembly of the mouse.</title>
        <authorList>
            <person name="Church D.M."/>
            <person name="Goodstadt L."/>
            <person name="Hillier L.W."/>
            <person name="Zody M.C."/>
            <person name="Goldstein S."/>
            <person name="She X."/>
            <person name="Bult C.J."/>
            <person name="Agarwala R."/>
            <person name="Cherry J.L."/>
            <person name="DiCuccio M."/>
            <person name="Hlavina W."/>
            <person name="Kapustin Y."/>
            <person name="Meric P."/>
            <person name="Maglott D."/>
            <person name="Birtle Z."/>
            <person name="Marques A.C."/>
            <person name="Graves T."/>
            <person name="Zhou S."/>
            <person name="Teague B."/>
            <person name="Potamousis K."/>
            <person name="Churas C."/>
            <person name="Place M."/>
            <person name="Herschleb J."/>
            <person name="Runnheim R."/>
            <person name="Forrest D."/>
            <person name="Amos-Landgraf J."/>
            <person name="Schwartz D.C."/>
            <person name="Cheng Z."/>
            <person name="Lindblad-Toh K."/>
            <person name="Eichler E.E."/>
            <person name="Ponting C.P."/>
        </authorList>
    </citation>
    <scope>NUCLEOTIDE SEQUENCE [LARGE SCALE GENOMIC DNA]</scope>
    <source>
        <strain>C57BL/6J</strain>
    </source>
</reference>
<reference evidence="6" key="2">
    <citation type="journal article" date="2004" name="Genome Res.">
        <title>The status, quality, and expansion of the NIH full-length cDNA project: the Mammalian Gene Collection (MGC).</title>
        <authorList>
            <consortium name="The MGC Project Team"/>
        </authorList>
    </citation>
    <scope>NUCLEOTIDE SEQUENCE [LARGE SCALE MRNA]</scope>
    <source>
        <tissue evidence="6">Brain</tissue>
    </source>
</reference>
<reference key="3">
    <citation type="journal article" date="2003" name="J. Med. Genet.">
        <title>Heterogeneity of breakpoints in non-LCR-mediated large constitutional deletions of the 17q11.2 NF1 tumour suppressor region.</title>
        <authorList>
            <person name="Kehrer-Sawatzki H."/>
            <person name="Tinschert S."/>
            <person name="Jenne D.E."/>
        </authorList>
    </citation>
    <scope>IDENTIFICATION</scope>
</reference>
<reference key="4">
    <citation type="journal article" date="2010" name="Cell">
        <title>A tissue-specific atlas of mouse protein phosphorylation and expression.</title>
        <authorList>
            <person name="Huttlin E.L."/>
            <person name="Jedrychowski M.P."/>
            <person name="Elias J.E."/>
            <person name="Goswami T."/>
            <person name="Rad R."/>
            <person name="Beausoleil S.A."/>
            <person name="Villen J."/>
            <person name="Haas W."/>
            <person name="Sowa M.E."/>
            <person name="Gygi S.P."/>
        </authorList>
    </citation>
    <scope>IDENTIFICATION BY MASS SPECTROMETRY [LARGE SCALE ANALYSIS]</scope>
    <source>
        <tissue>Brain</tissue>
    </source>
</reference>
<reference key="5">
    <citation type="journal article" date="2015" name="Hum. Mutat.">
        <title>Whole-exome sequencing identifies a variant in TMEM132E causing autosomal-recessive nonsyndromic hearing loss DFNB99.</title>
        <authorList>
            <person name="Li J."/>
            <person name="Zhao X."/>
            <person name="Xin Q."/>
            <person name="Shan S."/>
            <person name="Jiang B."/>
            <person name="Jin Y."/>
            <person name="Yuan H."/>
            <person name="Dai P."/>
            <person name="Xiao R."/>
            <person name="Zhang Q."/>
            <person name="Xiao J."/>
            <person name="Shao C."/>
            <person name="Gong Y."/>
            <person name="Liu Q."/>
        </authorList>
    </citation>
    <scope>TISSUE SPECIFICITY</scope>
</reference>
<dbReference type="EMBL" id="AL645797">
    <property type="status" value="NOT_ANNOTATED_CDS"/>
    <property type="molecule type" value="Genomic_DNA"/>
</dbReference>
<dbReference type="EMBL" id="BC137906">
    <property type="protein sequence ID" value="AAI37907.1"/>
    <property type="molecule type" value="mRNA"/>
</dbReference>
<dbReference type="EMBL" id="BC145026">
    <property type="protein sequence ID" value="AAI45027.1"/>
    <property type="molecule type" value="mRNA"/>
</dbReference>
<dbReference type="EMBL" id="BN000151">
    <property type="protein sequence ID" value="CAD80243.1"/>
    <property type="status" value="ALT_SEQ"/>
    <property type="molecule type" value="mRNA"/>
</dbReference>
<dbReference type="CCDS" id="CCDS25144.2"/>
<dbReference type="RefSeq" id="NP_001291368.1">
    <property type="nucleotide sequence ID" value="NM_001304439.2"/>
</dbReference>
<dbReference type="SMR" id="Q6IEE6"/>
<dbReference type="FunCoup" id="Q6IEE6">
    <property type="interactions" value="38"/>
</dbReference>
<dbReference type="STRING" id="10090.ENSMUSP00000052484"/>
<dbReference type="GlyCosmos" id="Q6IEE6">
    <property type="glycosylation" value="4 sites, No reported glycans"/>
</dbReference>
<dbReference type="GlyGen" id="Q6IEE6">
    <property type="glycosylation" value="5 sites, 2 N-linked glycans (2 sites)"/>
</dbReference>
<dbReference type="iPTMnet" id="Q6IEE6"/>
<dbReference type="PhosphoSitePlus" id="Q6IEE6"/>
<dbReference type="PaxDb" id="10090-ENSMUSP00000052484"/>
<dbReference type="ProteomicsDB" id="254522"/>
<dbReference type="ProteomicsDB" id="322126"/>
<dbReference type="Antibodypedia" id="55084">
    <property type="antibodies" value="67 antibodies from 16 providers"/>
</dbReference>
<dbReference type="DNASU" id="270893"/>
<dbReference type="Ensembl" id="ENSMUST00000054245.8">
    <property type="protein sequence ID" value="ENSMUSP00000052484.5"/>
    <property type="gene ID" value="ENSMUSG00000020701.13"/>
</dbReference>
<dbReference type="GeneID" id="270893"/>
<dbReference type="KEGG" id="mmu:270893"/>
<dbReference type="UCSC" id="uc007kmv.2">
    <property type="organism name" value="mouse"/>
</dbReference>
<dbReference type="AGR" id="MGI:2685490"/>
<dbReference type="CTD" id="124842"/>
<dbReference type="MGI" id="MGI:2685490">
    <property type="gene designation" value="Tmem132e"/>
</dbReference>
<dbReference type="VEuPathDB" id="HostDB:ENSMUSG00000020701"/>
<dbReference type="eggNOG" id="KOG4789">
    <property type="taxonomic scope" value="Eukaryota"/>
</dbReference>
<dbReference type="GeneTree" id="ENSGT00940000158479"/>
<dbReference type="HOGENOM" id="CLU_009871_0_0_1"/>
<dbReference type="InParanoid" id="Q6IEE6"/>
<dbReference type="OMA" id="GEMVPRR"/>
<dbReference type="OrthoDB" id="10026202at2759"/>
<dbReference type="TreeFam" id="TF314981"/>
<dbReference type="BioGRID-ORCS" id="270893">
    <property type="hits" value="0 hits in 61 CRISPR screens"/>
</dbReference>
<dbReference type="PRO" id="PR:Q6IEE6"/>
<dbReference type="Proteomes" id="UP000000589">
    <property type="component" value="Chromosome 11"/>
</dbReference>
<dbReference type="RNAct" id="Q6IEE6">
    <property type="molecule type" value="protein"/>
</dbReference>
<dbReference type="Bgee" id="ENSMUSG00000020701">
    <property type="expression patterns" value="Expressed in lumbar dorsal root ganglion and 99 other cell types or tissues"/>
</dbReference>
<dbReference type="ExpressionAtlas" id="Q6IEE6">
    <property type="expression patterns" value="baseline and differential"/>
</dbReference>
<dbReference type="GO" id="GO:0044297">
    <property type="term" value="C:cell body"/>
    <property type="evidence" value="ECO:0000314"/>
    <property type="project" value="UniProtKB"/>
</dbReference>
<dbReference type="GO" id="GO:0016020">
    <property type="term" value="C:membrane"/>
    <property type="evidence" value="ECO:0007669"/>
    <property type="project" value="UniProtKB-SubCell"/>
</dbReference>
<dbReference type="GO" id="GO:0035677">
    <property type="term" value="P:posterior lateral line neuromast hair cell development"/>
    <property type="evidence" value="ECO:0007669"/>
    <property type="project" value="Ensembl"/>
</dbReference>
<dbReference type="InterPro" id="IPR055422">
    <property type="entry name" value="Ig_TMEM132_2nd"/>
</dbReference>
<dbReference type="InterPro" id="IPR055423">
    <property type="entry name" value="Ig_TMEM132_5th"/>
</dbReference>
<dbReference type="InterPro" id="IPR055424">
    <property type="entry name" value="Ig_TMEM132_6th"/>
</dbReference>
<dbReference type="InterPro" id="IPR026307">
    <property type="entry name" value="TMEM132"/>
</dbReference>
<dbReference type="InterPro" id="IPR055421">
    <property type="entry name" value="TMEM132_3rd"/>
</dbReference>
<dbReference type="InterPro" id="IPR031436">
    <property type="entry name" value="TMEM132_C"/>
</dbReference>
<dbReference type="InterPro" id="IPR031437">
    <property type="entry name" value="TMEM132_M"/>
</dbReference>
<dbReference type="InterPro" id="IPR031435">
    <property type="entry name" value="TMEM132_N"/>
</dbReference>
<dbReference type="PANTHER" id="PTHR13388">
    <property type="entry name" value="DETONATOR, ISOFORM E"/>
    <property type="match status" value="1"/>
</dbReference>
<dbReference type="PANTHER" id="PTHR13388:SF7">
    <property type="entry name" value="TRANSMEMBRANE PROTEIN 132E"/>
    <property type="match status" value="1"/>
</dbReference>
<dbReference type="Pfam" id="PF23481">
    <property type="entry name" value="Ig_TMEM132_2nd"/>
    <property type="match status" value="1"/>
</dbReference>
<dbReference type="Pfam" id="PF16070">
    <property type="entry name" value="Ig_TMEM132_4th"/>
    <property type="match status" value="1"/>
</dbReference>
<dbReference type="Pfam" id="PF23486">
    <property type="entry name" value="Ig_TMEM132_5th"/>
    <property type="match status" value="1"/>
</dbReference>
<dbReference type="Pfam" id="PF23487">
    <property type="entry name" value="Ig_TMEM132_6th"/>
    <property type="match status" value="1"/>
</dbReference>
<dbReference type="Pfam" id="PF23039">
    <property type="entry name" value="TMEM132_3rd"/>
    <property type="match status" value="1"/>
</dbReference>
<dbReference type="Pfam" id="PF15706">
    <property type="entry name" value="TMEM132_C"/>
    <property type="match status" value="1"/>
</dbReference>
<dbReference type="Pfam" id="PF15705">
    <property type="entry name" value="TMEM132_N"/>
    <property type="match status" value="1"/>
</dbReference>
<proteinExistence type="evidence at protein level"/>
<feature type="signal peptide" evidence="2">
    <location>
        <begin position="1"/>
        <end position="23"/>
    </location>
</feature>
<feature type="chain" id="PRO_0000287104" description="Transmembrane protein 132E">
    <location>
        <begin position="24"/>
        <end position="1074"/>
    </location>
</feature>
<feature type="topological domain" description="Extracellular" evidence="2">
    <location>
        <begin position="26"/>
        <end position="894"/>
    </location>
</feature>
<feature type="transmembrane region" description="Helical" evidence="2">
    <location>
        <begin position="895"/>
        <end position="915"/>
    </location>
</feature>
<feature type="topological domain" description="Cytoplasmic" evidence="2">
    <location>
        <begin position="916"/>
        <end position="1074"/>
    </location>
</feature>
<feature type="region of interest" description="Disordered" evidence="3">
    <location>
        <begin position="205"/>
        <end position="224"/>
    </location>
</feature>
<feature type="region of interest" description="Disordered" evidence="3">
    <location>
        <begin position="243"/>
        <end position="266"/>
    </location>
</feature>
<feature type="region of interest" description="Disordered" evidence="3">
    <location>
        <begin position="564"/>
        <end position="587"/>
    </location>
</feature>
<feature type="region of interest" description="Disordered" evidence="3">
    <location>
        <begin position="816"/>
        <end position="867"/>
    </location>
</feature>
<feature type="region of interest" description="Disordered" evidence="3">
    <location>
        <begin position="962"/>
        <end position="1064"/>
    </location>
</feature>
<feature type="compositionally biased region" description="Low complexity" evidence="3">
    <location>
        <begin position="247"/>
        <end position="262"/>
    </location>
</feature>
<feature type="compositionally biased region" description="Low complexity" evidence="3">
    <location>
        <begin position="843"/>
        <end position="854"/>
    </location>
</feature>
<feature type="compositionally biased region" description="Low complexity" evidence="3">
    <location>
        <begin position="973"/>
        <end position="985"/>
    </location>
</feature>
<feature type="compositionally biased region" description="Low complexity" evidence="3">
    <location>
        <begin position="1016"/>
        <end position="1026"/>
    </location>
</feature>
<feature type="compositionally biased region" description="Acidic residues" evidence="3">
    <location>
        <begin position="1035"/>
        <end position="1044"/>
    </location>
</feature>
<feature type="glycosylation site" description="N-linked (GlcNAc...) asparagine" evidence="2">
    <location>
        <position position="70"/>
    </location>
</feature>
<feature type="glycosylation site" description="N-linked (GlcNAc...) asparagine" evidence="2">
    <location>
        <position position="91"/>
    </location>
</feature>
<feature type="glycosylation site" description="N-linked (GlcNAc...) asparagine" evidence="2">
    <location>
        <position position="320"/>
    </location>
</feature>
<feature type="glycosylation site" description="N-linked (GlcNAc...) asparagine" evidence="2">
    <location>
        <position position="401"/>
    </location>
</feature>
<feature type="sequence conflict" description="In Ref. 2; AAI37907/AAI45027." evidence="5" ref="2">
    <location>
        <begin position="256"/>
        <end position="257"/>
    </location>
</feature>
<accession>Q6IEE6</accession>
<accession>A0A0A0MQ93</accession>
<accession>B7ZN59</accession>
<accession>Q5SUX0</accession>